<evidence type="ECO:0000255" key="1">
    <source>
        <dbReference type="HAMAP-Rule" id="MF_00160"/>
    </source>
</evidence>
<reference key="1">
    <citation type="journal article" date="2006" name="Mol. Microbiol.">
        <title>Role of pathogenicity island-associated integrases in the genome plasticity of uropathogenic Escherichia coli strain 536.</title>
        <authorList>
            <person name="Hochhut B."/>
            <person name="Wilde C."/>
            <person name="Balling G."/>
            <person name="Middendorf B."/>
            <person name="Dobrindt U."/>
            <person name="Brzuszkiewicz E."/>
            <person name="Gottschalk G."/>
            <person name="Carniel E."/>
            <person name="Hacker J."/>
        </authorList>
    </citation>
    <scope>NUCLEOTIDE SEQUENCE [LARGE SCALE GENOMIC DNA]</scope>
    <source>
        <strain>536 / UPEC</strain>
    </source>
</reference>
<gene>
    <name evidence="1" type="primary">serC</name>
    <name type="ordered locus">ECP_0918</name>
</gene>
<comment type="function">
    <text evidence="1">Catalyzes the reversible conversion of 3-phosphohydroxypyruvate to phosphoserine and of 3-hydroxy-2-oxo-4-phosphonooxybutanoate to phosphohydroxythreonine.</text>
</comment>
<comment type="catalytic activity">
    <reaction evidence="1">
        <text>O-phospho-L-serine + 2-oxoglutarate = 3-phosphooxypyruvate + L-glutamate</text>
        <dbReference type="Rhea" id="RHEA:14329"/>
        <dbReference type="ChEBI" id="CHEBI:16810"/>
        <dbReference type="ChEBI" id="CHEBI:18110"/>
        <dbReference type="ChEBI" id="CHEBI:29985"/>
        <dbReference type="ChEBI" id="CHEBI:57524"/>
        <dbReference type="EC" id="2.6.1.52"/>
    </reaction>
</comment>
<comment type="catalytic activity">
    <reaction evidence="1">
        <text>4-(phosphooxy)-L-threonine + 2-oxoglutarate = (R)-3-hydroxy-2-oxo-4-phosphooxybutanoate + L-glutamate</text>
        <dbReference type="Rhea" id="RHEA:16573"/>
        <dbReference type="ChEBI" id="CHEBI:16810"/>
        <dbReference type="ChEBI" id="CHEBI:29985"/>
        <dbReference type="ChEBI" id="CHEBI:58452"/>
        <dbReference type="ChEBI" id="CHEBI:58538"/>
        <dbReference type="EC" id="2.6.1.52"/>
    </reaction>
</comment>
<comment type="cofactor">
    <cofactor evidence="1">
        <name>pyridoxal 5'-phosphate</name>
        <dbReference type="ChEBI" id="CHEBI:597326"/>
    </cofactor>
    <text evidence="1">Binds 1 pyridoxal phosphate per subunit.</text>
</comment>
<comment type="pathway">
    <text evidence="1">Amino-acid biosynthesis; L-serine biosynthesis; L-serine from 3-phospho-D-glycerate: step 2/3.</text>
</comment>
<comment type="pathway">
    <text evidence="1">Cofactor biosynthesis; pyridoxine 5'-phosphate biosynthesis; pyridoxine 5'-phosphate from D-erythrose 4-phosphate: step 3/5.</text>
</comment>
<comment type="subunit">
    <text evidence="1">Homodimer.</text>
</comment>
<comment type="subcellular location">
    <subcellularLocation>
        <location evidence="1">Cytoplasm</location>
    </subcellularLocation>
</comment>
<comment type="similarity">
    <text evidence="1">Belongs to the class-V pyridoxal-phosphate-dependent aminotransferase family. SerC subfamily.</text>
</comment>
<dbReference type="EC" id="2.6.1.52" evidence="1"/>
<dbReference type="EMBL" id="CP000247">
    <property type="protein sequence ID" value="ABG68933.1"/>
    <property type="molecule type" value="Genomic_DNA"/>
</dbReference>
<dbReference type="RefSeq" id="WP_000057158.1">
    <property type="nucleotide sequence ID" value="NC_008253.1"/>
</dbReference>
<dbReference type="SMR" id="Q0TJE6"/>
<dbReference type="KEGG" id="ecp:ECP_0918"/>
<dbReference type="HOGENOM" id="CLU_034866_0_2_6"/>
<dbReference type="UniPathway" id="UPA00135">
    <property type="reaction ID" value="UER00197"/>
</dbReference>
<dbReference type="UniPathway" id="UPA00244">
    <property type="reaction ID" value="UER00311"/>
</dbReference>
<dbReference type="Proteomes" id="UP000009182">
    <property type="component" value="Chromosome"/>
</dbReference>
<dbReference type="GO" id="GO:0005737">
    <property type="term" value="C:cytoplasm"/>
    <property type="evidence" value="ECO:0007669"/>
    <property type="project" value="UniProtKB-SubCell"/>
</dbReference>
<dbReference type="GO" id="GO:0004648">
    <property type="term" value="F:O-phospho-L-serine:2-oxoglutarate aminotransferase activity"/>
    <property type="evidence" value="ECO:0007669"/>
    <property type="project" value="UniProtKB-UniRule"/>
</dbReference>
<dbReference type="GO" id="GO:0030170">
    <property type="term" value="F:pyridoxal phosphate binding"/>
    <property type="evidence" value="ECO:0007669"/>
    <property type="project" value="UniProtKB-UniRule"/>
</dbReference>
<dbReference type="GO" id="GO:0006564">
    <property type="term" value="P:L-serine biosynthetic process"/>
    <property type="evidence" value="ECO:0007669"/>
    <property type="project" value="UniProtKB-UniRule"/>
</dbReference>
<dbReference type="GO" id="GO:0008615">
    <property type="term" value="P:pyridoxine biosynthetic process"/>
    <property type="evidence" value="ECO:0007669"/>
    <property type="project" value="UniProtKB-UniRule"/>
</dbReference>
<dbReference type="CDD" id="cd00611">
    <property type="entry name" value="PSAT_like"/>
    <property type="match status" value="1"/>
</dbReference>
<dbReference type="FunFam" id="3.40.640.10:FF:000010">
    <property type="entry name" value="Phosphoserine aminotransferase"/>
    <property type="match status" value="1"/>
</dbReference>
<dbReference type="FunFam" id="3.90.1150.10:FF:000006">
    <property type="entry name" value="Phosphoserine aminotransferase"/>
    <property type="match status" value="1"/>
</dbReference>
<dbReference type="Gene3D" id="3.90.1150.10">
    <property type="entry name" value="Aspartate Aminotransferase, domain 1"/>
    <property type="match status" value="1"/>
</dbReference>
<dbReference type="Gene3D" id="3.40.640.10">
    <property type="entry name" value="Type I PLP-dependent aspartate aminotransferase-like (Major domain)"/>
    <property type="match status" value="1"/>
</dbReference>
<dbReference type="HAMAP" id="MF_00160">
    <property type="entry name" value="SerC_aminotrans_5"/>
    <property type="match status" value="1"/>
</dbReference>
<dbReference type="InterPro" id="IPR000192">
    <property type="entry name" value="Aminotrans_V_dom"/>
</dbReference>
<dbReference type="InterPro" id="IPR020578">
    <property type="entry name" value="Aminotrans_V_PyrdxlP_BS"/>
</dbReference>
<dbReference type="InterPro" id="IPR022278">
    <property type="entry name" value="Pser_aminoTfrase"/>
</dbReference>
<dbReference type="InterPro" id="IPR015424">
    <property type="entry name" value="PyrdxlP-dep_Trfase"/>
</dbReference>
<dbReference type="InterPro" id="IPR015421">
    <property type="entry name" value="PyrdxlP-dep_Trfase_major"/>
</dbReference>
<dbReference type="InterPro" id="IPR015422">
    <property type="entry name" value="PyrdxlP-dep_Trfase_small"/>
</dbReference>
<dbReference type="NCBIfam" id="NF003764">
    <property type="entry name" value="PRK05355.1"/>
    <property type="match status" value="1"/>
</dbReference>
<dbReference type="NCBIfam" id="TIGR01364">
    <property type="entry name" value="serC_1"/>
    <property type="match status" value="1"/>
</dbReference>
<dbReference type="PANTHER" id="PTHR43247">
    <property type="entry name" value="PHOSPHOSERINE AMINOTRANSFERASE"/>
    <property type="match status" value="1"/>
</dbReference>
<dbReference type="PANTHER" id="PTHR43247:SF1">
    <property type="entry name" value="PHOSPHOSERINE AMINOTRANSFERASE"/>
    <property type="match status" value="1"/>
</dbReference>
<dbReference type="Pfam" id="PF00266">
    <property type="entry name" value="Aminotran_5"/>
    <property type="match status" value="1"/>
</dbReference>
<dbReference type="PIRSF" id="PIRSF000525">
    <property type="entry name" value="SerC"/>
    <property type="match status" value="1"/>
</dbReference>
<dbReference type="SUPFAM" id="SSF53383">
    <property type="entry name" value="PLP-dependent transferases"/>
    <property type="match status" value="1"/>
</dbReference>
<dbReference type="PROSITE" id="PS00595">
    <property type="entry name" value="AA_TRANSFER_CLASS_5"/>
    <property type="match status" value="1"/>
</dbReference>
<proteinExistence type="inferred from homology"/>
<feature type="chain" id="PRO_1000203530" description="Phosphoserine aminotransferase">
    <location>
        <begin position="1"/>
        <end position="362"/>
    </location>
</feature>
<feature type="binding site" evidence="1">
    <location>
        <position position="9"/>
    </location>
    <ligand>
        <name>L-glutamate</name>
        <dbReference type="ChEBI" id="CHEBI:29985"/>
    </ligand>
</feature>
<feature type="binding site" evidence="1">
    <location>
        <position position="42"/>
    </location>
    <ligand>
        <name>L-glutamate</name>
        <dbReference type="ChEBI" id="CHEBI:29985"/>
    </ligand>
</feature>
<feature type="binding site" evidence="1">
    <location>
        <begin position="76"/>
        <end position="77"/>
    </location>
    <ligand>
        <name>pyridoxal 5'-phosphate</name>
        <dbReference type="ChEBI" id="CHEBI:597326"/>
    </ligand>
</feature>
<feature type="binding site" evidence="1">
    <location>
        <position position="102"/>
    </location>
    <ligand>
        <name>pyridoxal 5'-phosphate</name>
        <dbReference type="ChEBI" id="CHEBI:597326"/>
    </ligand>
</feature>
<feature type="binding site" evidence="1">
    <location>
        <position position="153"/>
    </location>
    <ligand>
        <name>pyridoxal 5'-phosphate</name>
        <dbReference type="ChEBI" id="CHEBI:597326"/>
    </ligand>
</feature>
<feature type="binding site" evidence="1">
    <location>
        <position position="174"/>
    </location>
    <ligand>
        <name>pyridoxal 5'-phosphate</name>
        <dbReference type="ChEBI" id="CHEBI:597326"/>
    </ligand>
</feature>
<feature type="binding site" evidence="1">
    <location>
        <position position="197"/>
    </location>
    <ligand>
        <name>pyridoxal 5'-phosphate</name>
        <dbReference type="ChEBI" id="CHEBI:597326"/>
    </ligand>
</feature>
<feature type="binding site" evidence="1">
    <location>
        <begin position="239"/>
        <end position="240"/>
    </location>
    <ligand>
        <name>pyridoxal 5'-phosphate</name>
        <dbReference type="ChEBI" id="CHEBI:597326"/>
    </ligand>
</feature>
<feature type="modified residue" description="N6-(pyridoxal phosphate)lysine" evidence="1">
    <location>
        <position position="198"/>
    </location>
</feature>
<accession>Q0TJE6</accession>
<sequence length="362" mass="39771">MAQIFNFSSGPAMLPAEVLKQAQQELRDWNGLGTSVMEVSHRGKEFIQVAEEAEKDFRDLLNVPSNYKVLFCHGGGRGQFAAVPLNILGDKTTADYVDAGYWAASAIKEAKKYCTPNVFDAKVTVDGLRAVKPMSEWQLSDNAAYMHYCPNETIDGIAIDETPDFGKDVVVAADFSSTILSRPIDVSRYGVIYAGAQKNIGPAGLTIVIVREDLLGKANIACPSILDYSILNDNDSMFNTPPTFAWYLSGLVFKWLKANGGVAAMDKINQQKAELLYGVIDNSDFYRNDVAKANRSRMNVPFQLADSALDKLFLEESFAAGLHALKGHRVVGGMRASIYNAMPLEGVKALTDFMVEFERRHG</sequence>
<protein>
    <recommendedName>
        <fullName evidence="1">Phosphoserine aminotransferase</fullName>
        <ecNumber evidence="1">2.6.1.52</ecNumber>
    </recommendedName>
    <alternativeName>
        <fullName evidence="1">Phosphohydroxythreonine aminotransferase</fullName>
        <shortName evidence="1">PSAT</shortName>
    </alternativeName>
</protein>
<keyword id="KW-0028">Amino-acid biosynthesis</keyword>
<keyword id="KW-0032">Aminotransferase</keyword>
<keyword id="KW-0963">Cytoplasm</keyword>
<keyword id="KW-0663">Pyridoxal phosphate</keyword>
<keyword id="KW-0664">Pyridoxine biosynthesis</keyword>
<keyword id="KW-0718">Serine biosynthesis</keyword>
<keyword id="KW-0808">Transferase</keyword>
<name>SERC_ECOL5</name>
<organism>
    <name type="scientific">Escherichia coli O6:K15:H31 (strain 536 / UPEC)</name>
    <dbReference type="NCBI Taxonomy" id="362663"/>
    <lineage>
        <taxon>Bacteria</taxon>
        <taxon>Pseudomonadati</taxon>
        <taxon>Pseudomonadota</taxon>
        <taxon>Gammaproteobacteria</taxon>
        <taxon>Enterobacterales</taxon>
        <taxon>Enterobacteriaceae</taxon>
        <taxon>Escherichia</taxon>
    </lineage>
</organism>